<protein>
    <recommendedName>
        <fullName evidence="7">Endoplasmic reticulum membrane protein complex subunit 10</fullName>
    </recommendedName>
</protein>
<sequence>MLVRLLRVILLASMVFCADILQLSYSDDAKDAIPLGTFEIDSTSDGNVTVTTVNIQDVEVSGEYCLNAQIEGKLDMPCFSYMKLRTPLKYDLIVDVDEDNEVKQVSLSYDETNDAITATVRYPEAGPTAPVTKLKKKTKTYADKKASKNKDGSTAQFEEDEEVKEVSWFQKNWKMLLLGLLIYNFVAGSAKKQQQGGAGADQKTE</sequence>
<feature type="signal peptide" evidence="3">
    <location>
        <begin position="1"/>
        <end position="17"/>
    </location>
</feature>
<feature type="chain" id="PRO_0000244437" description="Endoplasmic reticulum membrane protein complex subunit 10">
    <location>
        <begin position="18"/>
        <end position="205"/>
    </location>
</feature>
<feature type="topological domain" description="Lumenal" evidence="2">
    <location>
        <begin position="18"/>
        <end position="172"/>
    </location>
</feature>
<feature type="transmembrane region" description="Helical" evidence="3">
    <location>
        <begin position="173"/>
        <end position="190"/>
    </location>
</feature>
<feature type="topological domain" description="Cytoplasmic" evidence="2">
    <location>
        <begin position="191"/>
        <end position="205"/>
    </location>
</feature>
<feature type="glycosylation site" description="N-linked (GlcNAc...) asparagine" evidence="3">
    <location>
        <position position="47"/>
    </location>
</feature>
<feature type="strand" evidence="9">
    <location>
        <begin position="20"/>
        <end position="26"/>
    </location>
</feature>
<feature type="strand" evidence="9">
    <location>
        <begin position="28"/>
        <end position="30"/>
    </location>
</feature>
<feature type="strand" evidence="9">
    <location>
        <begin position="32"/>
        <end position="39"/>
    </location>
</feature>
<feature type="strand" evidence="9">
    <location>
        <begin position="44"/>
        <end position="46"/>
    </location>
</feature>
<feature type="strand" evidence="9">
    <location>
        <begin position="51"/>
        <end position="55"/>
    </location>
</feature>
<feature type="strand" evidence="9">
    <location>
        <begin position="62"/>
        <end position="73"/>
    </location>
</feature>
<feature type="strand" evidence="10">
    <location>
        <begin position="74"/>
        <end position="77"/>
    </location>
</feature>
<feature type="strand" evidence="9">
    <location>
        <begin position="79"/>
        <end position="84"/>
    </location>
</feature>
<feature type="strand" evidence="9">
    <location>
        <begin position="90"/>
        <end position="96"/>
    </location>
</feature>
<feature type="strand" evidence="9">
    <location>
        <begin position="102"/>
        <end position="109"/>
    </location>
</feature>
<feature type="strand" evidence="9">
    <location>
        <begin position="117"/>
        <end position="121"/>
    </location>
</feature>
<evidence type="ECO:0000250" key="1">
    <source>
        <dbReference type="UniProtKB" id="Q5J8M3"/>
    </source>
</evidence>
<evidence type="ECO:0000250" key="2">
    <source>
        <dbReference type="UniProtKB" id="Q5UCC4"/>
    </source>
</evidence>
<evidence type="ECO:0000255" key="3"/>
<evidence type="ECO:0000269" key="4">
    <source>
    </source>
</evidence>
<evidence type="ECO:0000269" key="5">
    <source>
    </source>
</evidence>
<evidence type="ECO:0000269" key="6">
    <source>
    </source>
</evidence>
<evidence type="ECO:0000303" key="7">
    <source>
    </source>
</evidence>
<evidence type="ECO:0000305" key="8">
    <source>
    </source>
</evidence>
<evidence type="ECO:0007829" key="9">
    <source>
        <dbReference type="PDB" id="6WB9"/>
    </source>
</evidence>
<evidence type="ECO:0007829" key="10">
    <source>
        <dbReference type="PDB" id="7KRA"/>
    </source>
</evidence>
<reference key="1">
    <citation type="journal article" date="1996" name="Yeast">
        <title>Nucleotide sequence analysis of a 32,500 bp region of the right arm of Saccharomyces cerevisiae chromosome IV.</title>
        <authorList>
            <person name="Brandt P."/>
            <person name="Ramlow S."/>
            <person name="Otto B."/>
            <person name="Bloecker H."/>
        </authorList>
    </citation>
    <scope>NUCLEOTIDE SEQUENCE [GENOMIC DNA]</scope>
</reference>
<reference key="2">
    <citation type="journal article" date="1997" name="Nature">
        <title>The nucleotide sequence of Saccharomyces cerevisiae chromosome IV.</title>
        <authorList>
            <person name="Jacq C."/>
            <person name="Alt-Moerbe J."/>
            <person name="Andre B."/>
            <person name="Arnold W."/>
            <person name="Bahr A."/>
            <person name="Ballesta J.P.G."/>
            <person name="Bargues M."/>
            <person name="Baron L."/>
            <person name="Becker A."/>
            <person name="Biteau N."/>
            <person name="Bloecker H."/>
            <person name="Blugeon C."/>
            <person name="Boskovic J."/>
            <person name="Brandt P."/>
            <person name="Brueckner M."/>
            <person name="Buitrago M.J."/>
            <person name="Coster F."/>
            <person name="Delaveau T."/>
            <person name="del Rey F."/>
            <person name="Dujon B."/>
            <person name="Eide L.G."/>
            <person name="Garcia-Cantalejo J.M."/>
            <person name="Goffeau A."/>
            <person name="Gomez-Peris A."/>
            <person name="Granotier C."/>
            <person name="Hanemann V."/>
            <person name="Hankeln T."/>
            <person name="Hoheisel J.D."/>
            <person name="Jaeger W."/>
            <person name="Jimenez A."/>
            <person name="Jonniaux J.-L."/>
            <person name="Kraemer C."/>
            <person name="Kuester H."/>
            <person name="Laamanen P."/>
            <person name="Legros Y."/>
            <person name="Louis E.J."/>
            <person name="Moeller-Rieker S."/>
            <person name="Monnet A."/>
            <person name="Moro M."/>
            <person name="Mueller-Auer S."/>
            <person name="Nussbaumer B."/>
            <person name="Paricio N."/>
            <person name="Paulin L."/>
            <person name="Perea J."/>
            <person name="Perez-Alonso M."/>
            <person name="Perez-Ortin J.E."/>
            <person name="Pohl T.M."/>
            <person name="Prydz H."/>
            <person name="Purnelle B."/>
            <person name="Rasmussen S.W."/>
            <person name="Remacha M.A."/>
            <person name="Revuelta J.L."/>
            <person name="Rieger M."/>
            <person name="Salom D."/>
            <person name="Saluz H.P."/>
            <person name="Saiz J.E."/>
            <person name="Saren A.-M."/>
            <person name="Schaefer M."/>
            <person name="Scharfe M."/>
            <person name="Schmidt E.R."/>
            <person name="Schneider C."/>
            <person name="Scholler P."/>
            <person name="Schwarz S."/>
            <person name="Soler-Mira A."/>
            <person name="Urrestarazu L.A."/>
            <person name="Verhasselt P."/>
            <person name="Vissers S."/>
            <person name="Voet M."/>
            <person name="Volckaert G."/>
            <person name="Wagner G."/>
            <person name="Wambutt R."/>
            <person name="Wedler E."/>
            <person name="Wedler H."/>
            <person name="Woelfl S."/>
            <person name="Harris D.E."/>
            <person name="Bowman S."/>
            <person name="Brown D."/>
            <person name="Churcher C.M."/>
            <person name="Connor R."/>
            <person name="Dedman K."/>
            <person name="Gentles S."/>
            <person name="Hamlin N."/>
            <person name="Hunt S."/>
            <person name="Jones L."/>
            <person name="McDonald S."/>
            <person name="Murphy L.D."/>
            <person name="Niblett D."/>
            <person name="Odell C."/>
            <person name="Oliver K."/>
            <person name="Rajandream M.A."/>
            <person name="Richards C."/>
            <person name="Shore L."/>
            <person name="Walsh S.V."/>
            <person name="Barrell B.G."/>
            <person name="Dietrich F.S."/>
            <person name="Mulligan J.T."/>
            <person name="Allen E."/>
            <person name="Araujo R."/>
            <person name="Aviles E."/>
            <person name="Berno A."/>
            <person name="Carpenter J."/>
            <person name="Chen E."/>
            <person name="Cherry J.M."/>
            <person name="Chung E."/>
            <person name="Duncan M."/>
            <person name="Hunicke-Smith S."/>
            <person name="Hyman R.W."/>
            <person name="Komp C."/>
            <person name="Lashkari D."/>
            <person name="Lew H."/>
            <person name="Lin D."/>
            <person name="Mosedale D."/>
            <person name="Nakahara K."/>
            <person name="Namath A."/>
            <person name="Oefner P."/>
            <person name="Oh C."/>
            <person name="Petel F.X."/>
            <person name="Roberts D."/>
            <person name="Schramm S."/>
            <person name="Schroeder M."/>
            <person name="Shogren T."/>
            <person name="Shroff N."/>
            <person name="Winant A."/>
            <person name="Yelton M.A."/>
            <person name="Botstein D."/>
            <person name="Davis R.W."/>
            <person name="Johnston M."/>
            <person name="Andrews S."/>
            <person name="Brinkman R."/>
            <person name="Cooper J."/>
            <person name="Ding H."/>
            <person name="Du Z."/>
            <person name="Favello A."/>
            <person name="Fulton L."/>
            <person name="Gattung S."/>
            <person name="Greco T."/>
            <person name="Hallsworth K."/>
            <person name="Hawkins J."/>
            <person name="Hillier L.W."/>
            <person name="Jier M."/>
            <person name="Johnson D."/>
            <person name="Johnston L."/>
            <person name="Kirsten J."/>
            <person name="Kucaba T."/>
            <person name="Langston Y."/>
            <person name="Latreille P."/>
            <person name="Le T."/>
            <person name="Mardis E."/>
            <person name="Menezes S."/>
            <person name="Miller N."/>
            <person name="Nhan M."/>
            <person name="Pauley A."/>
            <person name="Peluso D."/>
            <person name="Rifkin L."/>
            <person name="Riles L."/>
            <person name="Taich A."/>
            <person name="Trevaskis E."/>
            <person name="Vignati D."/>
            <person name="Wilcox L."/>
            <person name="Wohldman P."/>
            <person name="Vaudin M."/>
            <person name="Wilson R."/>
            <person name="Waterston R."/>
            <person name="Albermann K."/>
            <person name="Hani J."/>
            <person name="Heumann K."/>
            <person name="Kleine K."/>
            <person name="Mewes H.-W."/>
            <person name="Zollner A."/>
            <person name="Zaccaria P."/>
        </authorList>
    </citation>
    <scope>NUCLEOTIDE SEQUENCE [LARGE SCALE GENOMIC DNA]</scope>
    <source>
        <strain>ATCC 204508 / S288c</strain>
    </source>
</reference>
<reference key="3">
    <citation type="journal article" date="2014" name="G3 (Bethesda)">
        <title>The reference genome sequence of Saccharomyces cerevisiae: Then and now.</title>
        <authorList>
            <person name="Engel S.R."/>
            <person name="Dietrich F.S."/>
            <person name="Fisk D.G."/>
            <person name="Binkley G."/>
            <person name="Balakrishnan R."/>
            <person name="Costanzo M.C."/>
            <person name="Dwight S.S."/>
            <person name="Hitz B.C."/>
            <person name="Karra K."/>
            <person name="Nash R.S."/>
            <person name="Weng S."/>
            <person name="Wong E.D."/>
            <person name="Lloyd P."/>
            <person name="Skrzypek M.S."/>
            <person name="Miyasato S.R."/>
            <person name="Simison M."/>
            <person name="Cherry J.M."/>
        </authorList>
    </citation>
    <scope>GENOME REANNOTATION</scope>
    <source>
        <strain>ATCC 204508 / S288c</strain>
    </source>
</reference>
<reference key="4">
    <citation type="journal article" date="2007" name="Genome Res.">
        <title>Approaching a complete repository of sequence-verified protein-encoding clones for Saccharomyces cerevisiae.</title>
        <authorList>
            <person name="Hu Y."/>
            <person name="Rolfs A."/>
            <person name="Bhullar B."/>
            <person name="Murthy T.V.S."/>
            <person name="Zhu C."/>
            <person name="Berger M.F."/>
            <person name="Camargo A.A."/>
            <person name="Kelley F."/>
            <person name="McCarron S."/>
            <person name="Jepson D."/>
            <person name="Richardson A."/>
            <person name="Raphael J."/>
            <person name="Moreira D."/>
            <person name="Taycher E."/>
            <person name="Zuo D."/>
            <person name="Mohr S."/>
            <person name="Kane M.F."/>
            <person name="Williamson J."/>
            <person name="Simpson A.J.G."/>
            <person name="Bulyk M.L."/>
            <person name="Harlow E."/>
            <person name="Marsischky G."/>
            <person name="Kolodner R.D."/>
            <person name="LaBaer J."/>
        </authorList>
    </citation>
    <scope>NUCLEOTIDE SEQUENCE [GENOMIC DNA]</scope>
    <source>
        <strain>ATCC 204508 / S288c</strain>
    </source>
</reference>
<reference key="5">
    <citation type="journal article" date="2003" name="Nature">
        <title>Global analysis of protein localization in budding yeast.</title>
        <authorList>
            <person name="Huh W.-K."/>
            <person name="Falvo J.V."/>
            <person name="Gerke L.C."/>
            <person name="Carroll A.S."/>
            <person name="Howson R.W."/>
            <person name="Weissman J.S."/>
            <person name="O'Shea E.K."/>
        </authorList>
    </citation>
    <scope>SUBCELLULAR LOCATION [LARGE SCALE ANALYSIS]</scope>
</reference>
<reference key="6">
    <citation type="journal article" date="2003" name="Nature">
        <title>Global analysis of protein expression in yeast.</title>
        <authorList>
            <person name="Ghaemmaghami S."/>
            <person name="Huh W.-K."/>
            <person name="Bower K."/>
            <person name="Howson R.W."/>
            <person name="Belle A."/>
            <person name="Dephoure N."/>
            <person name="O'Shea E.K."/>
            <person name="Weissman J.S."/>
        </authorList>
    </citation>
    <scope>LEVEL OF PROTEIN EXPRESSION [LARGE SCALE ANALYSIS]</scope>
</reference>
<reference key="7">
    <citation type="journal article" date="2015" name="F1000Research">
        <title>The ubiquitous and ancient ER membrane protein complex (EMC): tether or not?</title>
        <authorList>
            <person name="Wideman J.G."/>
        </authorList>
    </citation>
    <scope>IDENTIFICATION</scope>
    <scope>FUNCTION</scope>
</reference>
<reference key="8">
    <citation type="journal article" date="2018" name="Elife">
        <title>The ER membrane protein complex interacts cotranslationally to enable biogenesis of multipass membrane proteins.</title>
        <authorList>
            <person name="Shurtleff M.J."/>
            <person name="Itzhak D.N."/>
            <person name="Hussmann J.A."/>
            <person name="Schirle Oakdale N.T."/>
            <person name="Costa E.A."/>
            <person name="Jonikas M."/>
            <person name="Weibezahn J."/>
            <person name="Popova K.D."/>
            <person name="Jan C.H."/>
            <person name="Sinitcyn P."/>
            <person name="Vembar S.S."/>
            <person name="Hernandez H."/>
            <person name="Cox J."/>
            <person name="Burlingame A.L."/>
            <person name="Brodsky J.L."/>
            <person name="Frost A."/>
            <person name="Borner G.H."/>
            <person name="Weissman J.S."/>
        </authorList>
    </citation>
    <scope>FUNCTION</scope>
    <scope>SUBUNIT</scope>
</reference>
<organism>
    <name type="scientific">Saccharomyces cerevisiae (strain ATCC 204508 / S288c)</name>
    <name type="common">Baker's yeast</name>
    <dbReference type="NCBI Taxonomy" id="559292"/>
    <lineage>
        <taxon>Eukaryota</taxon>
        <taxon>Fungi</taxon>
        <taxon>Dikarya</taxon>
        <taxon>Ascomycota</taxon>
        <taxon>Saccharomycotina</taxon>
        <taxon>Saccharomycetes</taxon>
        <taxon>Saccharomycetales</taxon>
        <taxon>Saccharomycetaceae</taxon>
        <taxon>Saccharomyces</taxon>
    </lineage>
</organism>
<name>EMC10_YEAST</name>
<dbReference type="EMBL" id="X84162">
    <property type="protein sequence ID" value="CAA58972.1"/>
    <property type="molecule type" value="Genomic_DNA"/>
</dbReference>
<dbReference type="EMBL" id="Z49209">
    <property type="protein sequence ID" value="CAA89085.1"/>
    <property type="molecule type" value="Genomic_DNA"/>
</dbReference>
<dbReference type="EMBL" id="Z74352">
    <property type="protein sequence ID" value="CAA98874.1"/>
    <property type="molecule type" value="Genomic_DNA"/>
</dbReference>
<dbReference type="EMBL" id="AY557649">
    <property type="protein sequence ID" value="AAS55975.1"/>
    <property type="molecule type" value="Genomic_DNA"/>
</dbReference>
<dbReference type="EMBL" id="BK006938">
    <property type="protein sequence ID" value="DAA11902.1"/>
    <property type="molecule type" value="Genomic_DNA"/>
</dbReference>
<dbReference type="PIR" id="S54040">
    <property type="entry name" value="S54040"/>
</dbReference>
<dbReference type="RefSeq" id="NP_010341.3">
    <property type="nucleotide sequence ID" value="NM_001180364.3"/>
</dbReference>
<dbReference type="PDB" id="6WB9">
    <property type="method" value="EM"/>
    <property type="resolution" value="3.00 A"/>
    <property type="chains" value="0=1-205"/>
</dbReference>
<dbReference type="PDB" id="7KRA">
    <property type="method" value="EM"/>
    <property type="resolution" value="3.20 A"/>
    <property type="chains" value="H=1-205"/>
</dbReference>
<dbReference type="PDB" id="7KTX">
    <property type="method" value="EM"/>
    <property type="resolution" value="4.30 A"/>
    <property type="chains" value="H=1-205"/>
</dbReference>
<dbReference type="PDBsum" id="6WB9"/>
<dbReference type="PDBsum" id="7KRA"/>
<dbReference type="PDBsum" id="7KTX"/>
<dbReference type="EMDB" id="EMD-21587"/>
<dbReference type="EMDB" id="EMD-23003"/>
<dbReference type="EMDB" id="EMD-23033"/>
<dbReference type="SMR" id="Q12025"/>
<dbReference type="BioGRID" id="32109">
    <property type="interactions" value="91"/>
</dbReference>
<dbReference type="DIP" id="DIP-5465N"/>
<dbReference type="FunCoup" id="Q12025">
    <property type="interactions" value="58"/>
</dbReference>
<dbReference type="IntAct" id="Q12025">
    <property type="interactions" value="9"/>
</dbReference>
<dbReference type="MINT" id="Q12025"/>
<dbReference type="STRING" id="4932.YDR056C"/>
<dbReference type="TCDB" id="3.A.27.1.2">
    <property type="family name" value="the endoplasmic reticulum membrane protein insertion complex (emc) family"/>
</dbReference>
<dbReference type="GlyCosmos" id="Q12025">
    <property type="glycosylation" value="1 site, No reported glycans"/>
</dbReference>
<dbReference type="GlyGen" id="Q12025">
    <property type="glycosylation" value="2 sites"/>
</dbReference>
<dbReference type="iPTMnet" id="Q12025"/>
<dbReference type="PaxDb" id="4932-YDR056C"/>
<dbReference type="PeptideAtlas" id="Q12025"/>
<dbReference type="TopDownProteomics" id="Q12025"/>
<dbReference type="EnsemblFungi" id="YDR056C_mRNA">
    <property type="protein sequence ID" value="YDR056C"/>
    <property type="gene ID" value="YDR056C"/>
</dbReference>
<dbReference type="GeneID" id="851626"/>
<dbReference type="KEGG" id="sce:YDR056C"/>
<dbReference type="AGR" id="SGD:S000002463"/>
<dbReference type="SGD" id="S000002463">
    <property type="gene designation" value="EMC10"/>
</dbReference>
<dbReference type="VEuPathDB" id="FungiDB:YDR056C"/>
<dbReference type="eggNOG" id="ENOG502S1Z2">
    <property type="taxonomic scope" value="Eukaryota"/>
</dbReference>
<dbReference type="HOGENOM" id="CLU_117308_0_0_1"/>
<dbReference type="InParanoid" id="Q12025"/>
<dbReference type="OMA" id="SFIQKNW"/>
<dbReference type="OrthoDB" id="1894652at2759"/>
<dbReference type="BioCyc" id="YEAST:G3O-29665-MONOMER"/>
<dbReference type="BioGRID-ORCS" id="851626">
    <property type="hits" value="0 hits in 10 CRISPR screens"/>
</dbReference>
<dbReference type="PRO" id="PR:Q12025"/>
<dbReference type="Proteomes" id="UP000002311">
    <property type="component" value="Chromosome IV"/>
</dbReference>
<dbReference type="RNAct" id="Q12025">
    <property type="molecule type" value="protein"/>
</dbReference>
<dbReference type="GO" id="GO:0072546">
    <property type="term" value="C:EMC complex"/>
    <property type="evidence" value="ECO:0000314"/>
    <property type="project" value="UniProtKB"/>
</dbReference>
<dbReference type="GO" id="GO:0005783">
    <property type="term" value="C:endoplasmic reticulum"/>
    <property type="evidence" value="ECO:0007005"/>
    <property type="project" value="SGD"/>
</dbReference>
<dbReference type="GO" id="GO:0045050">
    <property type="term" value="P:protein insertion into ER membrane by stop-transfer membrane-anchor sequence"/>
    <property type="evidence" value="ECO:0000315"/>
    <property type="project" value="UniProtKB"/>
</dbReference>
<dbReference type="CDD" id="cd22209">
    <property type="entry name" value="EMC10"/>
    <property type="match status" value="1"/>
</dbReference>
<dbReference type="Pfam" id="PF21203">
    <property type="entry name" value="ECM10"/>
    <property type="match status" value="1"/>
</dbReference>
<keyword id="KW-0002">3D-structure</keyword>
<keyword id="KW-0256">Endoplasmic reticulum</keyword>
<keyword id="KW-0325">Glycoprotein</keyword>
<keyword id="KW-0472">Membrane</keyword>
<keyword id="KW-1185">Reference proteome</keyword>
<keyword id="KW-0732">Signal</keyword>
<keyword id="KW-0812">Transmembrane</keyword>
<keyword id="KW-1133">Transmembrane helix</keyword>
<proteinExistence type="evidence at protein level"/>
<gene>
    <name evidence="7" type="primary">EMC10</name>
    <name type="ordered locus">YDR056C</name>
    <name type="ORF">D4219</name>
</gene>
<accession>Q12025</accession>
<accession>D6VS42</accession>
<comment type="function">
    <text evidence="1 6">Part of the endoplasmic reticulum membrane protein complex (EMC) that enables the energy-independent insertion into endoplasmic reticulum membranes of newly synthesized membrane proteins (PubMed:29809151). Preferentially accommodates proteins with transmembrane domains that are weakly hydrophobic or contain destabilizing features such as charged and aromatic residues (PubMed:29809151). Involved in the cotranslational insertion of multi-pass membrane proteins in which stop-transfer membrane-anchor sequences become ER membrane spanning helices (PubMed:29809151). It is also required for the post-translational insertion of tail-anchored/TA proteins in endoplasmic reticulum membranes. By mediating the proper cotranslational insertion of N-terminal transmembrane domains in an N-exo topology, with translocated N-terminus in the lumen of the ER, controls the topology of multi-pass membrane proteins (By similarity).</text>
</comment>
<comment type="subunit">
    <text evidence="6 8">Component of the ER membrane protein complex (EMC).</text>
</comment>
<comment type="subcellular location">
    <subcellularLocation>
        <location evidence="4">Endoplasmic reticulum membrane</location>
        <topology evidence="2">Single-pass type I membrane protein</topology>
    </subcellularLocation>
</comment>
<comment type="miscellaneous">
    <text evidence="5">Present with 1600 molecules/cell in log phase SD medium.</text>
</comment>